<reference key="1">
    <citation type="journal article" date="2003" name="Nucleic Acids Res.">
        <title>Genome sequence of Chlamydophila caviae (Chlamydia psittaci GPIC): examining the role of niche-specific genes in the evolution of the Chlamydiaceae.</title>
        <authorList>
            <person name="Read T.D."/>
            <person name="Myers G.S.A."/>
            <person name="Brunham R.C."/>
            <person name="Nelson W.C."/>
            <person name="Paulsen I.T."/>
            <person name="Heidelberg J.F."/>
            <person name="Holtzapple E.K."/>
            <person name="Khouri H.M."/>
            <person name="Federova N.B."/>
            <person name="Carty H.A."/>
            <person name="Umayam L.A."/>
            <person name="Haft D.H."/>
            <person name="Peterson J.D."/>
            <person name="Beanan M.J."/>
            <person name="White O."/>
            <person name="Salzberg S.L."/>
            <person name="Hsia R.-C."/>
            <person name="McClarty G."/>
            <person name="Rank R.G."/>
            <person name="Bavoil P.M."/>
            <person name="Fraser C.M."/>
        </authorList>
    </citation>
    <scope>NUCLEOTIDE SEQUENCE [LARGE SCALE GENOMIC DNA]</scope>
    <source>
        <strain>ATCC VR-813 / DSM 19441 / 03DC25 / GPIC</strain>
    </source>
</reference>
<comment type="function">
    <text evidence="1">Catalyzes the attachment of alanine to tRNA(Ala) in a two-step reaction: alanine is first activated by ATP to form Ala-AMP and then transferred to the acceptor end of tRNA(Ala). Also edits incorrectly charged Ser-tRNA(Ala) and Gly-tRNA(Ala) via its editing domain.</text>
</comment>
<comment type="catalytic activity">
    <reaction evidence="1">
        <text>tRNA(Ala) + L-alanine + ATP = L-alanyl-tRNA(Ala) + AMP + diphosphate</text>
        <dbReference type="Rhea" id="RHEA:12540"/>
        <dbReference type="Rhea" id="RHEA-COMP:9657"/>
        <dbReference type="Rhea" id="RHEA-COMP:9923"/>
        <dbReference type="ChEBI" id="CHEBI:30616"/>
        <dbReference type="ChEBI" id="CHEBI:33019"/>
        <dbReference type="ChEBI" id="CHEBI:57972"/>
        <dbReference type="ChEBI" id="CHEBI:78442"/>
        <dbReference type="ChEBI" id="CHEBI:78497"/>
        <dbReference type="ChEBI" id="CHEBI:456215"/>
        <dbReference type="EC" id="6.1.1.7"/>
    </reaction>
</comment>
<comment type="cofactor">
    <cofactor evidence="1">
        <name>Zn(2+)</name>
        <dbReference type="ChEBI" id="CHEBI:29105"/>
    </cofactor>
    <text evidence="1">Binds 1 zinc ion per subunit.</text>
</comment>
<comment type="subcellular location">
    <subcellularLocation>
        <location evidence="1">Cytoplasm</location>
    </subcellularLocation>
</comment>
<comment type="domain">
    <text evidence="1">Consists of three domains; the N-terminal catalytic domain, the editing domain and the C-terminal C-Ala domain. The editing domain removes incorrectly charged amino acids, while the C-Ala domain, along with tRNA(Ala), serves as a bridge to cooperatively bring together the editing and aminoacylation centers thus stimulating deacylation of misacylated tRNAs.</text>
</comment>
<comment type="similarity">
    <text evidence="1">Belongs to the class-II aminoacyl-tRNA synthetase family.</text>
</comment>
<accession>Q821R2</accession>
<dbReference type="EC" id="6.1.1.7" evidence="1"/>
<dbReference type="EMBL" id="AE015925">
    <property type="protein sequence ID" value="AAP05617.1"/>
    <property type="molecule type" value="Genomic_DNA"/>
</dbReference>
<dbReference type="RefSeq" id="WP_011006831.1">
    <property type="nucleotide sequence ID" value="NC_003361.3"/>
</dbReference>
<dbReference type="SMR" id="Q821R2"/>
<dbReference type="STRING" id="227941.CCA_00876"/>
<dbReference type="KEGG" id="cca:CCA_00876"/>
<dbReference type="eggNOG" id="COG0013">
    <property type="taxonomic scope" value="Bacteria"/>
</dbReference>
<dbReference type="HOGENOM" id="CLU_004485_1_1_0"/>
<dbReference type="OrthoDB" id="9803884at2"/>
<dbReference type="Proteomes" id="UP000002193">
    <property type="component" value="Chromosome"/>
</dbReference>
<dbReference type="GO" id="GO:0005829">
    <property type="term" value="C:cytosol"/>
    <property type="evidence" value="ECO:0007669"/>
    <property type="project" value="TreeGrafter"/>
</dbReference>
<dbReference type="GO" id="GO:0004813">
    <property type="term" value="F:alanine-tRNA ligase activity"/>
    <property type="evidence" value="ECO:0007669"/>
    <property type="project" value="UniProtKB-UniRule"/>
</dbReference>
<dbReference type="GO" id="GO:0002161">
    <property type="term" value="F:aminoacyl-tRNA deacylase activity"/>
    <property type="evidence" value="ECO:0007669"/>
    <property type="project" value="TreeGrafter"/>
</dbReference>
<dbReference type="GO" id="GO:0005524">
    <property type="term" value="F:ATP binding"/>
    <property type="evidence" value="ECO:0007669"/>
    <property type="project" value="UniProtKB-UniRule"/>
</dbReference>
<dbReference type="GO" id="GO:0000049">
    <property type="term" value="F:tRNA binding"/>
    <property type="evidence" value="ECO:0007669"/>
    <property type="project" value="UniProtKB-KW"/>
</dbReference>
<dbReference type="GO" id="GO:0008270">
    <property type="term" value="F:zinc ion binding"/>
    <property type="evidence" value="ECO:0007669"/>
    <property type="project" value="UniProtKB-UniRule"/>
</dbReference>
<dbReference type="GO" id="GO:0006419">
    <property type="term" value="P:alanyl-tRNA aminoacylation"/>
    <property type="evidence" value="ECO:0007669"/>
    <property type="project" value="UniProtKB-UniRule"/>
</dbReference>
<dbReference type="CDD" id="cd00673">
    <property type="entry name" value="AlaRS_core"/>
    <property type="match status" value="1"/>
</dbReference>
<dbReference type="FunFam" id="2.40.30.130:FF:000001">
    <property type="entry name" value="Alanine--tRNA ligase"/>
    <property type="match status" value="1"/>
</dbReference>
<dbReference type="FunFam" id="3.10.310.40:FF:000001">
    <property type="entry name" value="Alanine--tRNA ligase"/>
    <property type="match status" value="1"/>
</dbReference>
<dbReference type="FunFam" id="3.30.930.10:FF:000004">
    <property type="entry name" value="Alanine--tRNA ligase"/>
    <property type="match status" value="1"/>
</dbReference>
<dbReference type="FunFam" id="3.30.980.10:FF:000004">
    <property type="entry name" value="Alanine--tRNA ligase, cytoplasmic"/>
    <property type="match status" value="1"/>
</dbReference>
<dbReference type="Gene3D" id="2.40.30.130">
    <property type="match status" value="1"/>
</dbReference>
<dbReference type="Gene3D" id="3.10.310.40">
    <property type="match status" value="1"/>
</dbReference>
<dbReference type="Gene3D" id="3.30.54.20">
    <property type="match status" value="1"/>
</dbReference>
<dbReference type="Gene3D" id="6.10.250.550">
    <property type="match status" value="1"/>
</dbReference>
<dbReference type="Gene3D" id="3.30.930.10">
    <property type="entry name" value="Bira Bifunctional Protein, Domain 2"/>
    <property type="match status" value="1"/>
</dbReference>
<dbReference type="Gene3D" id="3.30.980.10">
    <property type="entry name" value="Threonyl-trna Synthetase, Chain A, domain 2"/>
    <property type="match status" value="1"/>
</dbReference>
<dbReference type="HAMAP" id="MF_00036_B">
    <property type="entry name" value="Ala_tRNA_synth_B"/>
    <property type="match status" value="1"/>
</dbReference>
<dbReference type="InterPro" id="IPR045864">
    <property type="entry name" value="aa-tRNA-synth_II/BPL/LPL"/>
</dbReference>
<dbReference type="InterPro" id="IPR002318">
    <property type="entry name" value="Ala-tRNA-lgiase_IIc"/>
</dbReference>
<dbReference type="InterPro" id="IPR018162">
    <property type="entry name" value="Ala-tRNA-ligase_IIc_anticod-bd"/>
</dbReference>
<dbReference type="InterPro" id="IPR018165">
    <property type="entry name" value="Ala-tRNA-synth_IIc_core"/>
</dbReference>
<dbReference type="InterPro" id="IPR018164">
    <property type="entry name" value="Ala-tRNA-synth_IIc_N"/>
</dbReference>
<dbReference type="InterPro" id="IPR050058">
    <property type="entry name" value="Ala-tRNA_ligase"/>
</dbReference>
<dbReference type="InterPro" id="IPR023033">
    <property type="entry name" value="Ala_tRNA_ligase_euk/bac"/>
</dbReference>
<dbReference type="InterPro" id="IPR003156">
    <property type="entry name" value="DHHA1_dom"/>
</dbReference>
<dbReference type="InterPro" id="IPR018163">
    <property type="entry name" value="Thr/Ala-tRNA-synth_IIc_edit"/>
</dbReference>
<dbReference type="InterPro" id="IPR009000">
    <property type="entry name" value="Transl_B-barrel_sf"/>
</dbReference>
<dbReference type="InterPro" id="IPR012947">
    <property type="entry name" value="tRNA_SAD"/>
</dbReference>
<dbReference type="NCBIfam" id="TIGR00344">
    <property type="entry name" value="alaS"/>
    <property type="match status" value="1"/>
</dbReference>
<dbReference type="PANTHER" id="PTHR11777:SF9">
    <property type="entry name" value="ALANINE--TRNA LIGASE, CYTOPLASMIC"/>
    <property type="match status" value="1"/>
</dbReference>
<dbReference type="PANTHER" id="PTHR11777">
    <property type="entry name" value="ALANYL-TRNA SYNTHETASE"/>
    <property type="match status" value="1"/>
</dbReference>
<dbReference type="Pfam" id="PF02272">
    <property type="entry name" value="DHHA1"/>
    <property type="match status" value="1"/>
</dbReference>
<dbReference type="Pfam" id="PF01411">
    <property type="entry name" value="tRNA-synt_2c"/>
    <property type="match status" value="1"/>
</dbReference>
<dbReference type="Pfam" id="PF07973">
    <property type="entry name" value="tRNA_SAD"/>
    <property type="match status" value="1"/>
</dbReference>
<dbReference type="PRINTS" id="PR00980">
    <property type="entry name" value="TRNASYNTHALA"/>
</dbReference>
<dbReference type="SMART" id="SM00863">
    <property type="entry name" value="tRNA_SAD"/>
    <property type="match status" value="1"/>
</dbReference>
<dbReference type="SUPFAM" id="SSF55681">
    <property type="entry name" value="Class II aaRS and biotin synthetases"/>
    <property type="match status" value="1"/>
</dbReference>
<dbReference type="SUPFAM" id="SSF101353">
    <property type="entry name" value="Putative anticodon-binding domain of alanyl-tRNA synthetase (AlaRS)"/>
    <property type="match status" value="1"/>
</dbReference>
<dbReference type="SUPFAM" id="SSF55186">
    <property type="entry name" value="ThrRS/AlaRS common domain"/>
    <property type="match status" value="1"/>
</dbReference>
<dbReference type="SUPFAM" id="SSF50447">
    <property type="entry name" value="Translation proteins"/>
    <property type="match status" value="1"/>
</dbReference>
<dbReference type="PROSITE" id="PS50860">
    <property type="entry name" value="AA_TRNA_LIGASE_II_ALA"/>
    <property type="match status" value="1"/>
</dbReference>
<name>SYA_CHLCV</name>
<gene>
    <name evidence="1" type="primary">alaS</name>
    <name type="ordered locus">CCA_00876</name>
</gene>
<evidence type="ECO:0000255" key="1">
    <source>
        <dbReference type="HAMAP-Rule" id="MF_00036"/>
    </source>
</evidence>
<sequence>MLSNTLRSNFLKFYANRHHTIVPSSPVFPHNDPSILFTNAGMNQFKDIFLNKETVSYSRATTSQKCIRAGGKHNDLDNVGHTSRHLTFFEMLGNFSFGDYFKEQAIAFAWEVSLSVFNLDPDRIYATVHEKDDEAFALWEKHLPSERIFRLTDKDNFWSMAETGPCGYCSELLFDRGEKFGTAASPLEDTEGERFLEYWNLVFMEFNRTAEGSLLALPNKHVDTGAGLERLVSILSGTNTVFEADVLRLLISKTEQLSGKTYHADEALGAAFRVIADHTRSLSFAIADGLLPGNTERGYVLRKILRRAVNYGKRLGFTQPFLADIVPSLVDTMGEAYPELRLSLSQIQEVMTMEEENYFKSLHRGGNLLQQVLKSSSSSSIISGEDAFKLKDTYGLPLDEIALLAKDYDFTVDMETFYQLEEEAKERSRKNIAKSHSSTDTVYDSLSLGENSEFVGYNDLSCDTFIEALVSNGKQVSSLKEKEKGALILKVTPFYAEKGGQIGDSGEIFCSDGTFIVSHTTSPKAGIVIHHGEVSQGQLSQDQAVTAQVNCIRRKKIGNNHTGCHLLHKALEVTLGDHIRQAGSYVDDTKIRLDFTHPKAIAPEDLASIELLVNEKIRENHRVETREAMYSDVMNSKEIKQFFGDKYSDVVRVVSAGFSHELCGGTHAEFTGDLGYFRILKEHAVATGIRRIEAVTGREAEALAHQDNENLNEIALVLQSPRDQILNKLQNVLEERKEQAKQISELENKLIHSLLDKLIDGCQQVDDVSYLIHHLPESESHRLQQYANCLHQKIPLRLISLWTTQKNGKYIIFSRISDDLVKQGLQAKDLLKIVLTPCGGRWGGKDIFAQGSADNLPQADALNNTLWQWISTQLI</sequence>
<feature type="chain" id="PRO_0000075090" description="Alanine--tRNA ligase">
    <location>
        <begin position="1"/>
        <end position="875"/>
    </location>
</feature>
<feature type="binding site" evidence="1">
    <location>
        <position position="561"/>
    </location>
    <ligand>
        <name>Zn(2+)</name>
        <dbReference type="ChEBI" id="CHEBI:29105"/>
    </ligand>
</feature>
<feature type="binding site" evidence="1">
    <location>
        <position position="565"/>
    </location>
    <ligand>
        <name>Zn(2+)</name>
        <dbReference type="ChEBI" id="CHEBI:29105"/>
    </ligand>
</feature>
<feature type="binding site" evidence="1">
    <location>
        <position position="663"/>
    </location>
    <ligand>
        <name>Zn(2+)</name>
        <dbReference type="ChEBI" id="CHEBI:29105"/>
    </ligand>
</feature>
<feature type="binding site" evidence="1">
    <location>
        <position position="667"/>
    </location>
    <ligand>
        <name>Zn(2+)</name>
        <dbReference type="ChEBI" id="CHEBI:29105"/>
    </ligand>
</feature>
<organism>
    <name type="scientific">Chlamydia caviae (strain ATCC VR-813 / DSM 19441 / 03DC25 / GPIC)</name>
    <name type="common">Chlamydophila caviae</name>
    <dbReference type="NCBI Taxonomy" id="227941"/>
    <lineage>
        <taxon>Bacteria</taxon>
        <taxon>Pseudomonadati</taxon>
        <taxon>Chlamydiota</taxon>
        <taxon>Chlamydiia</taxon>
        <taxon>Chlamydiales</taxon>
        <taxon>Chlamydiaceae</taxon>
        <taxon>Chlamydia/Chlamydophila group</taxon>
        <taxon>Chlamydia</taxon>
    </lineage>
</organism>
<protein>
    <recommendedName>
        <fullName evidence="1">Alanine--tRNA ligase</fullName>
        <ecNumber evidence="1">6.1.1.7</ecNumber>
    </recommendedName>
    <alternativeName>
        <fullName evidence="1">Alanyl-tRNA synthetase</fullName>
        <shortName evidence="1">AlaRS</shortName>
    </alternativeName>
</protein>
<keyword id="KW-0030">Aminoacyl-tRNA synthetase</keyword>
<keyword id="KW-0067">ATP-binding</keyword>
<keyword id="KW-0963">Cytoplasm</keyword>
<keyword id="KW-0436">Ligase</keyword>
<keyword id="KW-0479">Metal-binding</keyword>
<keyword id="KW-0547">Nucleotide-binding</keyword>
<keyword id="KW-0648">Protein biosynthesis</keyword>
<keyword id="KW-0694">RNA-binding</keyword>
<keyword id="KW-0820">tRNA-binding</keyword>
<keyword id="KW-0862">Zinc</keyword>
<proteinExistence type="inferred from homology"/>